<keyword id="KW-0007">Acetylation</keyword>
<keyword id="KW-0053">Apoptosis</keyword>
<keyword id="KW-0963">Cytoplasm</keyword>
<keyword id="KW-0238">DNA-binding</keyword>
<keyword id="KW-0378">Hydrolase</keyword>
<keyword id="KW-0395">Inflammatory response</keyword>
<keyword id="KW-0458">Lysosome</keyword>
<keyword id="KW-0479">Metal-binding</keyword>
<keyword id="KW-0511">Multifunctional enzyme</keyword>
<keyword id="KW-0539">Nucleus</keyword>
<keyword id="KW-0597">Phosphoprotein</keyword>
<keyword id="KW-0645">Protease</keyword>
<keyword id="KW-1185">Reference proteome</keyword>
<keyword id="KW-0677">Repeat</keyword>
<keyword id="KW-0788">Thiol protease</keyword>
<keyword id="KW-0808">Transferase</keyword>
<keyword id="KW-0833">Ubl conjugation pathway</keyword>
<keyword id="KW-0862">Zinc</keyword>
<keyword id="KW-0863">Zinc-finger</keyword>
<feature type="initiator methionine" description="Removed" evidence="2">
    <location>
        <position position="1"/>
    </location>
</feature>
<feature type="chain" id="PRO_0000188792" description="Tumor necrosis factor alpha-induced protein 3">
    <location>
        <begin position="2"/>
        <end position="790"/>
    </location>
</feature>
<feature type="chain" id="PRO_0000418129" description="A20p50">
    <location>
        <begin position="2"/>
        <end position="439"/>
    </location>
</feature>
<feature type="chain" id="PRO_0000418130" description="A20p37">
    <location>
        <begin position="440"/>
        <end position="790"/>
    </location>
</feature>
<feature type="domain" description="OTU" evidence="3">
    <location>
        <begin position="92"/>
        <end position="263"/>
    </location>
</feature>
<feature type="zinc finger region" description="A20-type 1" evidence="4">
    <location>
        <begin position="381"/>
        <end position="416"/>
    </location>
</feature>
<feature type="zinc finger region" description="A20-type 2" evidence="4">
    <location>
        <begin position="472"/>
        <end position="507"/>
    </location>
</feature>
<feature type="zinc finger region" description="A20-type 3" evidence="4">
    <location>
        <begin position="515"/>
        <end position="548"/>
    </location>
</feature>
<feature type="zinc finger region" description="A20-type 4" evidence="4">
    <location>
        <begin position="601"/>
        <end position="636"/>
    </location>
</feature>
<feature type="zinc finger region" description="A20-type 5" evidence="4">
    <location>
        <begin position="651"/>
        <end position="686"/>
    </location>
</feature>
<feature type="zinc finger region" description="A20-type 6" evidence="4">
    <location>
        <begin position="710"/>
        <end position="745"/>
    </location>
</feature>
<feature type="zinc finger region" description="A20-type 7" evidence="4">
    <location>
        <begin position="756"/>
        <end position="790"/>
    </location>
</feature>
<feature type="region of interest" description="TRAF-binding" evidence="1">
    <location>
        <begin position="58"/>
        <end position="300"/>
    </location>
</feature>
<feature type="region of interest" description="Interaction with ubiquitin" evidence="1">
    <location>
        <begin position="157"/>
        <end position="159"/>
    </location>
</feature>
<feature type="region of interest" description="Interaction with ubiquitin" evidence="1">
    <location>
        <begin position="190"/>
        <end position="192"/>
    </location>
</feature>
<feature type="region of interest" description="Interaction with ubiquitin" evidence="1">
    <location>
        <begin position="224"/>
        <end position="227"/>
    </location>
</feature>
<feature type="region of interest" description="Interaction with TNIP1" evidence="1">
    <location>
        <begin position="369"/>
        <end position="775"/>
    </location>
</feature>
<feature type="region of interest" description="Interaction with RIPK1" evidence="1">
    <location>
        <begin position="386"/>
        <end position="453"/>
    </location>
</feature>
<feature type="region of interest" description="Disordered" evidence="5">
    <location>
        <begin position="415"/>
        <end position="467"/>
    </location>
</feature>
<feature type="region of interest" description="Disordered" evidence="5">
    <location>
        <begin position="550"/>
        <end position="580"/>
    </location>
</feature>
<feature type="region of interest" description="Required for proteasomal degradation of UBE2N and UBE2D3, TRAF6 deubiquitination, and TAX1BP1 interaction with UBE2N" evidence="1">
    <location>
        <begin position="605"/>
        <end position="655"/>
    </location>
</feature>
<feature type="region of interest" description="Sufficient for inhibitory activity of TNF-induced NF-kappa-B activity" evidence="1">
    <location>
        <begin position="606"/>
        <end position="790"/>
    </location>
</feature>
<feature type="region of interest" description="Disordered" evidence="5">
    <location>
        <begin position="689"/>
        <end position="712"/>
    </location>
</feature>
<feature type="region of interest" description="Required for lysosomal localization and for TRAF2 lysosomal degradation" evidence="1">
    <location>
        <begin position="697"/>
        <end position="790"/>
    </location>
</feature>
<feature type="compositionally biased region" description="Polar residues" evidence="5">
    <location>
        <begin position="566"/>
        <end position="576"/>
    </location>
</feature>
<feature type="compositionally biased region" description="Basic and acidic residues" evidence="5">
    <location>
        <begin position="689"/>
        <end position="705"/>
    </location>
</feature>
<feature type="active site" evidence="1">
    <location>
        <position position="100"/>
    </location>
</feature>
<feature type="active site" description="Nucleophile" evidence="1">
    <location>
        <position position="103"/>
    </location>
</feature>
<feature type="active site" description="Proton acceptor" evidence="1">
    <location>
        <position position="256"/>
    </location>
</feature>
<feature type="binding site" evidence="4">
    <location>
        <position position="387"/>
    </location>
    <ligand>
        <name>Zn(2+)</name>
        <dbReference type="ChEBI" id="CHEBI:29105"/>
        <label>1</label>
    </ligand>
</feature>
<feature type="binding site" evidence="4">
    <location>
        <position position="392"/>
    </location>
    <ligand>
        <name>Zn(2+)</name>
        <dbReference type="ChEBI" id="CHEBI:29105"/>
        <label>1</label>
    </ligand>
</feature>
<feature type="binding site" evidence="4">
    <location>
        <position position="404"/>
    </location>
    <ligand>
        <name>Zn(2+)</name>
        <dbReference type="ChEBI" id="CHEBI:29105"/>
        <label>1</label>
    </ligand>
</feature>
<feature type="binding site" evidence="4">
    <location>
        <position position="407"/>
    </location>
    <ligand>
        <name>Zn(2+)</name>
        <dbReference type="ChEBI" id="CHEBI:29105"/>
        <label>1</label>
    </ligand>
</feature>
<feature type="binding site" evidence="4">
    <location>
        <position position="478"/>
    </location>
    <ligand>
        <name>Zn(2+)</name>
        <dbReference type="ChEBI" id="CHEBI:29105"/>
        <label>2</label>
    </ligand>
</feature>
<feature type="binding site" evidence="4">
    <location>
        <position position="483"/>
    </location>
    <ligand>
        <name>Zn(2+)</name>
        <dbReference type="ChEBI" id="CHEBI:29105"/>
        <label>2</label>
    </ligand>
</feature>
<feature type="binding site" evidence="4">
    <location>
        <position position="495"/>
    </location>
    <ligand>
        <name>Zn(2+)</name>
        <dbReference type="ChEBI" id="CHEBI:29105"/>
        <label>2</label>
    </ligand>
</feature>
<feature type="binding site" evidence="4">
    <location>
        <position position="498"/>
    </location>
    <ligand>
        <name>Zn(2+)</name>
        <dbReference type="ChEBI" id="CHEBI:29105"/>
        <label>2</label>
    </ligand>
</feature>
<feature type="binding site" evidence="4">
    <location>
        <position position="521"/>
    </location>
    <ligand>
        <name>Zn(2+)</name>
        <dbReference type="ChEBI" id="CHEBI:29105"/>
        <label>3</label>
    </ligand>
</feature>
<feature type="binding site" evidence="4">
    <location>
        <position position="524"/>
    </location>
    <ligand>
        <name>Zn(2+)</name>
        <dbReference type="ChEBI" id="CHEBI:29105"/>
        <label>3</label>
    </ligand>
</feature>
<feature type="binding site" evidence="4">
    <location>
        <position position="536"/>
    </location>
    <ligand>
        <name>Zn(2+)</name>
        <dbReference type="ChEBI" id="CHEBI:29105"/>
        <label>3</label>
    </ligand>
</feature>
<feature type="binding site" evidence="4">
    <location>
        <position position="539"/>
    </location>
    <ligand>
        <name>Zn(2+)</name>
        <dbReference type="ChEBI" id="CHEBI:29105"/>
        <label>3</label>
    </ligand>
</feature>
<feature type="binding site" evidence="4">
    <location>
        <position position="607"/>
    </location>
    <ligand>
        <name>Zn(2+)</name>
        <dbReference type="ChEBI" id="CHEBI:29105"/>
        <label>4</label>
    </ligand>
</feature>
<feature type="binding site" evidence="4">
    <location>
        <position position="612"/>
    </location>
    <ligand>
        <name>Zn(2+)</name>
        <dbReference type="ChEBI" id="CHEBI:29105"/>
        <label>4</label>
    </ligand>
</feature>
<feature type="binding site" evidence="4">
    <location>
        <position position="624"/>
    </location>
    <ligand>
        <name>Zn(2+)</name>
        <dbReference type="ChEBI" id="CHEBI:29105"/>
        <label>4</label>
    </ligand>
</feature>
<feature type="binding site" evidence="4">
    <location>
        <position position="627"/>
    </location>
    <ligand>
        <name>Zn(2+)</name>
        <dbReference type="ChEBI" id="CHEBI:29105"/>
        <label>4</label>
    </ligand>
</feature>
<feature type="binding site" evidence="4">
    <location>
        <position position="657"/>
    </location>
    <ligand>
        <name>Zn(2+)</name>
        <dbReference type="ChEBI" id="CHEBI:29105"/>
        <label>5</label>
    </ligand>
</feature>
<feature type="binding site" evidence="4">
    <location>
        <position position="662"/>
    </location>
    <ligand>
        <name>Zn(2+)</name>
        <dbReference type="ChEBI" id="CHEBI:29105"/>
        <label>5</label>
    </ligand>
</feature>
<feature type="binding site" evidence="4">
    <location>
        <position position="674"/>
    </location>
    <ligand>
        <name>Zn(2+)</name>
        <dbReference type="ChEBI" id="CHEBI:29105"/>
        <label>5</label>
    </ligand>
</feature>
<feature type="binding site" evidence="4">
    <location>
        <position position="677"/>
    </location>
    <ligand>
        <name>Zn(2+)</name>
        <dbReference type="ChEBI" id="CHEBI:29105"/>
        <label>5</label>
    </ligand>
</feature>
<feature type="binding site" evidence="4">
    <location>
        <position position="716"/>
    </location>
    <ligand>
        <name>Zn(2+)</name>
        <dbReference type="ChEBI" id="CHEBI:29105"/>
        <label>6</label>
    </ligand>
</feature>
<feature type="binding site" evidence="4">
    <location>
        <position position="721"/>
    </location>
    <ligand>
        <name>Zn(2+)</name>
        <dbReference type="ChEBI" id="CHEBI:29105"/>
        <label>6</label>
    </ligand>
</feature>
<feature type="binding site" evidence="4">
    <location>
        <position position="733"/>
    </location>
    <ligand>
        <name>Zn(2+)</name>
        <dbReference type="ChEBI" id="CHEBI:29105"/>
        <label>6</label>
    </ligand>
</feature>
<feature type="binding site" evidence="4">
    <location>
        <position position="736"/>
    </location>
    <ligand>
        <name>Zn(2+)</name>
        <dbReference type="ChEBI" id="CHEBI:29105"/>
        <label>6</label>
    </ligand>
</feature>
<feature type="binding site" evidence="4">
    <location>
        <position position="762"/>
    </location>
    <ligand>
        <name>Zn(2+)</name>
        <dbReference type="ChEBI" id="CHEBI:29105"/>
        <label>7</label>
    </ligand>
</feature>
<feature type="binding site" evidence="4">
    <location>
        <position position="767"/>
    </location>
    <ligand>
        <name>Zn(2+)</name>
        <dbReference type="ChEBI" id="CHEBI:29105"/>
        <label>7</label>
    </ligand>
</feature>
<feature type="binding site" evidence="4">
    <location>
        <position position="779"/>
    </location>
    <ligand>
        <name>Zn(2+)</name>
        <dbReference type="ChEBI" id="CHEBI:29105"/>
        <label>7</label>
    </ligand>
</feature>
<feature type="binding site" evidence="4">
    <location>
        <position position="782"/>
    </location>
    <ligand>
        <name>Zn(2+)</name>
        <dbReference type="ChEBI" id="CHEBI:29105"/>
        <label>7</label>
    </ligand>
</feature>
<feature type="site" description="Cleavage; by MALT1" evidence="1">
    <location>
        <begin position="439"/>
        <end position="440"/>
    </location>
</feature>
<feature type="modified residue" description="N-acetylalanine" evidence="2">
    <location>
        <position position="2"/>
    </location>
</feature>
<feature type="modified residue" description="Phosphoserine" evidence="2">
    <location>
        <position position="459"/>
    </location>
</feature>
<feature type="modified residue" description="Phosphoserine" evidence="2">
    <location>
        <position position="575"/>
    </location>
</feature>
<feature type="modified residue" description="Phosphoserine" evidence="2">
    <location>
        <position position="645"/>
    </location>
</feature>
<protein>
    <recommendedName>
        <fullName>Tumor necrosis factor alpha-induced protein 3</fullName>
        <shortName>TNF alpha-induced protein 3</shortName>
        <ecNumber>2.3.2.-</ecNumber>
        <ecNumber>3.4.19.12</ecNumber>
    </recommendedName>
    <component>
        <recommendedName>
            <fullName>A20p50</fullName>
        </recommendedName>
    </component>
    <component>
        <recommendedName>
            <fullName>A20p37</fullName>
        </recommendedName>
    </component>
</protein>
<accession>Q4R8W3</accession>
<dbReference type="EC" id="2.3.2.-"/>
<dbReference type="EC" id="3.4.19.12"/>
<dbReference type="EMBL" id="AB168334">
    <property type="protein sequence ID" value="BAE00458.1"/>
    <property type="molecule type" value="mRNA"/>
</dbReference>
<dbReference type="RefSeq" id="NP_001270745.1">
    <property type="nucleotide sequence ID" value="NM_001283816.1"/>
</dbReference>
<dbReference type="SMR" id="Q4R8W3"/>
<dbReference type="STRING" id="9541.ENSMFAP00000045359"/>
<dbReference type="MEROPS" id="C64.003"/>
<dbReference type="eggNOG" id="KOG4345">
    <property type="taxonomic scope" value="Eukaryota"/>
</dbReference>
<dbReference type="Proteomes" id="UP000233100">
    <property type="component" value="Unplaced"/>
</dbReference>
<dbReference type="GO" id="GO:0005764">
    <property type="term" value="C:lysosome"/>
    <property type="evidence" value="ECO:0007669"/>
    <property type="project" value="UniProtKB-SubCell"/>
</dbReference>
<dbReference type="GO" id="GO:0005634">
    <property type="term" value="C:nucleus"/>
    <property type="evidence" value="ECO:0007669"/>
    <property type="project" value="UniProtKB-SubCell"/>
</dbReference>
<dbReference type="GO" id="GO:0004843">
    <property type="term" value="F:cysteine-type deubiquitinase activity"/>
    <property type="evidence" value="ECO:0000250"/>
    <property type="project" value="UniProtKB"/>
</dbReference>
<dbReference type="GO" id="GO:0003677">
    <property type="term" value="F:DNA binding"/>
    <property type="evidence" value="ECO:0007669"/>
    <property type="project" value="UniProtKB-KW"/>
</dbReference>
<dbReference type="GO" id="GO:0070530">
    <property type="term" value="F:K63-linked polyubiquitin modification-dependent protein binding"/>
    <property type="evidence" value="ECO:0007669"/>
    <property type="project" value="TreeGrafter"/>
</dbReference>
<dbReference type="GO" id="GO:0004842">
    <property type="term" value="F:ubiquitin-protein transferase activity"/>
    <property type="evidence" value="ECO:0000250"/>
    <property type="project" value="UniProtKB"/>
</dbReference>
<dbReference type="GO" id="GO:0008270">
    <property type="term" value="F:zinc ion binding"/>
    <property type="evidence" value="ECO:0007669"/>
    <property type="project" value="UniProtKB-KW"/>
</dbReference>
<dbReference type="GO" id="GO:0006915">
    <property type="term" value="P:apoptotic process"/>
    <property type="evidence" value="ECO:0007669"/>
    <property type="project" value="UniProtKB-KW"/>
</dbReference>
<dbReference type="GO" id="GO:0016477">
    <property type="term" value="P:cell migration"/>
    <property type="evidence" value="ECO:0007669"/>
    <property type="project" value="TreeGrafter"/>
</dbReference>
<dbReference type="GO" id="GO:0070301">
    <property type="term" value="P:cellular response to hydrogen peroxide"/>
    <property type="evidence" value="ECO:0000250"/>
    <property type="project" value="UniProtKB"/>
</dbReference>
<dbReference type="GO" id="GO:0007010">
    <property type="term" value="P:cytoskeleton organization"/>
    <property type="evidence" value="ECO:0007669"/>
    <property type="project" value="TreeGrafter"/>
</dbReference>
<dbReference type="GO" id="GO:0006954">
    <property type="term" value="P:inflammatory response"/>
    <property type="evidence" value="ECO:0007669"/>
    <property type="project" value="UniProtKB-KW"/>
</dbReference>
<dbReference type="GO" id="GO:0043124">
    <property type="term" value="P:negative regulation of canonical NF-kappaB signal transduction"/>
    <property type="evidence" value="ECO:0000250"/>
    <property type="project" value="UniProtKB"/>
</dbReference>
<dbReference type="GO" id="GO:0050728">
    <property type="term" value="P:negative regulation of inflammatory response"/>
    <property type="evidence" value="ECO:0000250"/>
    <property type="project" value="UniProtKB"/>
</dbReference>
<dbReference type="GO" id="GO:0045824">
    <property type="term" value="P:negative regulation of innate immune response"/>
    <property type="evidence" value="ECO:0000250"/>
    <property type="project" value="UniProtKB"/>
</dbReference>
<dbReference type="GO" id="GO:0030177">
    <property type="term" value="P:positive regulation of Wnt signaling pathway"/>
    <property type="evidence" value="ECO:0007669"/>
    <property type="project" value="TreeGrafter"/>
</dbReference>
<dbReference type="GO" id="GO:0071947">
    <property type="term" value="P:protein deubiquitination involved in ubiquitin-dependent protein catabolic process"/>
    <property type="evidence" value="ECO:0007669"/>
    <property type="project" value="TreeGrafter"/>
</dbReference>
<dbReference type="GO" id="GO:0035871">
    <property type="term" value="P:protein K11-linked deubiquitination"/>
    <property type="evidence" value="ECO:0000250"/>
    <property type="project" value="UniProtKB"/>
</dbReference>
<dbReference type="GO" id="GO:0035523">
    <property type="term" value="P:protein K29-linked deubiquitination"/>
    <property type="evidence" value="ECO:0007669"/>
    <property type="project" value="TreeGrafter"/>
</dbReference>
<dbReference type="GO" id="GO:1990168">
    <property type="term" value="P:protein K33-linked deubiquitination"/>
    <property type="evidence" value="ECO:0007669"/>
    <property type="project" value="TreeGrafter"/>
</dbReference>
<dbReference type="GO" id="GO:0071108">
    <property type="term" value="P:protein K48-linked deubiquitination"/>
    <property type="evidence" value="ECO:0000250"/>
    <property type="project" value="UniProtKB"/>
</dbReference>
<dbReference type="GO" id="GO:0070936">
    <property type="term" value="P:protein K48-linked ubiquitination"/>
    <property type="evidence" value="ECO:0000250"/>
    <property type="project" value="UniProtKB"/>
</dbReference>
<dbReference type="GO" id="GO:0070536">
    <property type="term" value="P:protein K63-linked deubiquitination"/>
    <property type="evidence" value="ECO:0000250"/>
    <property type="project" value="UniProtKB"/>
</dbReference>
<dbReference type="CDD" id="cd22766">
    <property type="entry name" value="OTU_TNFAIP3"/>
    <property type="match status" value="1"/>
</dbReference>
<dbReference type="FunFam" id="4.10.240.30:FF:000001">
    <property type="entry name" value="Tumor necrosis factor alpha-induced protein 3"/>
    <property type="match status" value="1"/>
</dbReference>
<dbReference type="FunFam" id="1.20.5.4770:FF:000005">
    <property type="entry name" value="tumor necrosis factor alpha-induced protein 3"/>
    <property type="match status" value="1"/>
</dbReference>
<dbReference type="FunFam" id="3.90.70.80:FF:000011">
    <property type="entry name" value="tumor necrosis factor alpha-induced protein 3"/>
    <property type="match status" value="1"/>
</dbReference>
<dbReference type="FunFam" id="4.10.240.30:FF:000004">
    <property type="entry name" value="tumor necrosis factor alpha-induced protein 3 isoform X2"/>
    <property type="match status" value="1"/>
</dbReference>
<dbReference type="FunFam" id="4.10.240.30:FF:000002">
    <property type="entry name" value="Tumor necrosis factor, alpha-induced protein 3"/>
    <property type="match status" value="1"/>
</dbReference>
<dbReference type="Gene3D" id="1.20.5.4770">
    <property type="match status" value="1"/>
</dbReference>
<dbReference type="Gene3D" id="3.90.70.80">
    <property type="match status" value="1"/>
</dbReference>
<dbReference type="Gene3D" id="4.10.240.30">
    <property type="match status" value="3"/>
</dbReference>
<dbReference type="InterPro" id="IPR051346">
    <property type="entry name" value="OTU_Deubiquitinase"/>
</dbReference>
<dbReference type="InterPro" id="IPR003323">
    <property type="entry name" value="OTU_dom"/>
</dbReference>
<dbReference type="InterPro" id="IPR002653">
    <property type="entry name" value="Znf_A20"/>
</dbReference>
<dbReference type="PANTHER" id="PTHR13367:SF3">
    <property type="entry name" value="TUMOR NECROSIS FACTOR ALPHA-INDUCED PROTEIN 3"/>
    <property type="match status" value="1"/>
</dbReference>
<dbReference type="PANTHER" id="PTHR13367">
    <property type="entry name" value="UBIQUITIN THIOESTERASE"/>
    <property type="match status" value="1"/>
</dbReference>
<dbReference type="Pfam" id="PF02338">
    <property type="entry name" value="OTU"/>
    <property type="match status" value="1"/>
</dbReference>
<dbReference type="Pfam" id="PF01754">
    <property type="entry name" value="zf-A20"/>
    <property type="match status" value="5"/>
</dbReference>
<dbReference type="SMART" id="SM00259">
    <property type="entry name" value="ZnF_A20"/>
    <property type="match status" value="7"/>
</dbReference>
<dbReference type="PROSITE" id="PS50802">
    <property type="entry name" value="OTU"/>
    <property type="match status" value="1"/>
</dbReference>
<dbReference type="PROSITE" id="PS51036">
    <property type="entry name" value="ZF_A20"/>
    <property type="match status" value="7"/>
</dbReference>
<evidence type="ECO:0000250" key="1"/>
<evidence type="ECO:0000250" key="2">
    <source>
        <dbReference type="UniProtKB" id="P21580"/>
    </source>
</evidence>
<evidence type="ECO:0000255" key="3">
    <source>
        <dbReference type="PROSITE-ProRule" id="PRU00139"/>
    </source>
</evidence>
<evidence type="ECO:0000255" key="4">
    <source>
        <dbReference type="PROSITE-ProRule" id="PRU00451"/>
    </source>
</evidence>
<evidence type="ECO:0000256" key="5">
    <source>
        <dbReference type="SAM" id="MobiDB-lite"/>
    </source>
</evidence>
<evidence type="ECO:0000305" key="6"/>
<reference key="1">
    <citation type="submission" date="2005-06" db="EMBL/GenBank/DDBJ databases">
        <title>DNA sequences of macaque genes expressed in brain or testis and its evolutionary implications.</title>
        <authorList>
            <consortium name="International consortium for macaque cDNA sequencing and analysis"/>
        </authorList>
    </citation>
    <scope>NUCLEOTIDE SEQUENCE [LARGE SCALE MRNA]</scope>
    <source>
        <tissue>Testis</tissue>
    </source>
</reference>
<sequence length="790" mass="89534">MAEQVLPQALYLSNMRKAVKIRERTPEDIFKPTNGIIHHFKTMHRYTLEMFRTCQFCPQFREIIHKALIDKNIQASLESQKKLNWCREVRKLVALKTNGDGNCLMHATSQYMWGVQDTDLVLRKALFSTLKETDTRNFKFRWQLESLKSQEFVETGLCYDTRNWNDEWDNLIKMASTDTPMARSGLQYNSLEEIHIFVLCNILRRPIIVISDKMLRSLESGSNFAPLKVGGIYLPLHWPAQECYRYPIVLGYDSHHFVPLVTLKDSGPEIRAVPLVNRDRGRFEDLKVHFLTDPENEMKEKLLKEYLMVIEIPVQGWDHGTTHLINAAKLDEANLPKEINLVDDYFELVQHEYKKWQENSEQGRSEMHAQNPMESSLPQLSLMDVKCETPNCPFFMSVNTQPLCHECSERRQKNQNKLPKLNSKPGPEGLPGMALGASRGEAYEPLAWNPEEPTGGPHSAPPTAPSPFLFSETTAMKCRSPGCPFTLNVQHNGFCERCHNARQLHASHAADHTRHLDPGKCQACLQDVTRTFNGICSTCFKRTTAEASSSLSTSLPPSCHQRSKSDPSQLVRSPSPHSCHRAGNDAPAGCLSQAARTPGDRTGTSKCRKAGCMYFGTPENKGFCTLCFIEYRENKHLVAASGKASPTASRFQNTIPCLGRECGTLGSTMFEGYCQKCFIEAQNQRFHEAKRTEEQLRSSQRRDVPRTTQSTSRPKCARASCKNILACRSEELCMECQHPNPRMGPGAHRGEPAPEDPPKQRCWAPACDHFGNAKCNGYCNECFQFKQMYG</sequence>
<organism>
    <name type="scientific">Macaca fascicularis</name>
    <name type="common">Crab-eating macaque</name>
    <name type="synonym">Cynomolgus monkey</name>
    <dbReference type="NCBI Taxonomy" id="9541"/>
    <lineage>
        <taxon>Eukaryota</taxon>
        <taxon>Metazoa</taxon>
        <taxon>Chordata</taxon>
        <taxon>Craniata</taxon>
        <taxon>Vertebrata</taxon>
        <taxon>Euteleostomi</taxon>
        <taxon>Mammalia</taxon>
        <taxon>Eutheria</taxon>
        <taxon>Euarchontoglires</taxon>
        <taxon>Primates</taxon>
        <taxon>Haplorrhini</taxon>
        <taxon>Catarrhini</taxon>
        <taxon>Cercopithecidae</taxon>
        <taxon>Cercopithecinae</taxon>
        <taxon>Macaca</taxon>
    </lineage>
</organism>
<name>TNAP3_MACFA</name>
<proteinExistence type="evidence at transcript level"/>
<gene>
    <name type="primary">TNFAIP3</name>
    <name type="ORF">QtsA-11293</name>
</gene>
<comment type="function">
    <text evidence="1">Ubiquitin-editing enzyme that contains both ubiquitin ligase and deubiquitinase activities. Involved in immune and inflammatory responses signaled by cytokines, such as TNF-alpha and IL-1 beta, or pathogens via Toll-like receptors (TLRs) through terminating NF-kappa-B activity. Essential component of a ubiquitin-editing protein complex, comprising also RNF11, ITCH and TAX1BP1, that ensures the transient nature of inflammatory signaling pathways. In cooperation with TAX1BP1 promotes disassembly of E2-E3 ubiquitin protein ligase complexes in IL-1R and TNFR-1 pathways; affected are at least E3 ligases TRAF6, TRAF2 and BIRC2, and E2 ubiquitin-conjugating enzymes UBE2N and UBE2D3. In cooperation with TAX1BP1 promotes ubiquitination of UBE2N and proteasomal degradation of UBE2N and UBE2D3. Upon TNF stimulation, deubiquitinates 'Lys-63'-polyubiquitin chains on RIPK1 and catalyzes the formation of 'Lys-48'-polyubiquitin chains. This leads to RIPK1 proteasomal degradation and consequently termination of the TNF- or LPS-mediated activation of NF-kappa-B. Deubiquitinates TRAF6 probably acting on 'Lys-63'-linked polyubiquitin. Upon T-cell receptor (TCR)-mediated T-cell activation, deubiquitinates 'Lys-63'-polyubiquitin chains on MALT1 thereby mediating disassociation of the CBM (CARD11:BCL10:MALT1) and IKK complexes and preventing sustained IKK activation. Deubiquitinates NEMO/IKBKG; the function is facilitated by TNIP1 and leads to inhibition of NF-kappa-B activation. Upon stimulation by bacterial peptidoglycans, probably deubiquitinates RIPK2. Can also inhibit I-kappa-B-kinase (IKK) through a non-catalytic mechanism which involves polyubiquitin; polyubiquitin promotes association with IKBKG and prevents IKK MAP3K7-mediated phosphorylation. Targets TRAF2 for lysosomal degradation. In vitro able to deubiquitinate 'Lys-11'-, 'Lys-48'- and 'Lys-63' polyubiquitin chains. Inhibitor of programmed cell death. Has a role in the function of the lymphoid system. Required for LPS-induced production of pro-inflammatory cytokines and IFN beta in LPS-tolerized macrophages (By similarity).</text>
</comment>
<comment type="catalytic activity">
    <reaction>
        <text>Thiol-dependent hydrolysis of ester, thioester, amide, peptide and isopeptide bonds formed by the C-terminal Gly of ubiquitin (a 76-residue protein attached to proteins as an intracellular targeting signal).</text>
        <dbReference type="EC" id="3.4.19.12"/>
    </reaction>
</comment>
<comment type="subunit">
    <text evidence="1">Homodimer. Interacts with TNIP1, TAX1BP1 and TRAF2. Interacts with RNF11, ITCH and TAX1BP1 only after TNF stimulation; these interaction are transient and they are lost after 1 hour of stimulation with TNF (By similarity). Interacts with YWHAZ and YWHAH. Interacts with IKBKG; the interaction is induced by TNF stimulation and by polyubiquitin. Interacts with RIPK1. Interacts with UBE2N; the interaction requires TAX1BP1. Interacts with TRAF6 (By similarity).</text>
</comment>
<comment type="subcellular location">
    <subcellularLocation>
        <location evidence="1">Cytoplasm</location>
    </subcellularLocation>
    <subcellularLocation>
        <location evidence="1">Nucleus</location>
    </subcellularLocation>
    <subcellularLocation>
        <location evidence="1">Lysosome</location>
    </subcellularLocation>
</comment>
<comment type="subcellular location">
    <molecule>A20p50</molecule>
    <subcellularLocation>
        <location evidence="1">Cytoplasm</location>
    </subcellularLocation>
</comment>
<comment type="domain">
    <text evidence="1">The A20-type zinc fingers mediate the ubiquitin ligase activity. The A20-type zinc finger 4 selectively recognizes 'Lys-63'-linked polyubiquitin. The A20-type zinc finger 4-7 are sufficient to bind polyubiquitin (By similarity).</text>
</comment>
<comment type="domain">
    <text evidence="1">The OTU domain mediates the deubiquitinase activity.</text>
</comment>
<comment type="PTM">
    <text evidence="1">Proteolytically cleaved by MALT1 upon TCR stimulation; disrupts NF-kappa-B inhibitory function and results in increased IL-2 production. It is proposed that only a fraction of TNFAIP3 colocalized with TCR and CBM complex is cleaved, leaving the main TNFAIP3 pool intact (By similarity).</text>
</comment>
<comment type="similarity">
    <text evidence="6">Belongs to the peptidase C64 family.</text>
</comment>